<sequence>MTRFLDSDAMGDEELVERTLRPQYLREYIGQDKVKDQLKIFIEAAKLRDESLDHVLLFGPPGLGKTTMAFVIANELGVNLKQTSGPAIEKSGDLVAILNDLEPGDVLFIDEIHRMPMAVEEVLYSAMEDFYIDIMIGAGETSRSVHLDLPPFTLIGATTRAGMLSNPLRARFGITGHMEYYEENDLTEIIERTADIFEMKITYEAASELARRSRGTPRIANRLLKRVRDYAQIMGDGLIDDNITDKALTMLDVDHEGLDYVDQKILRTMIEMYNGGPVGLGTLSVNIAEERDTVEDMYEPYLIQKGFIMRTRTGRVATDKAYEHLGYQRFDK</sequence>
<organism>
    <name type="scientific">Streptococcus agalactiae serotype Ia (strain ATCC 27591 / A909 / CDC SS700)</name>
    <dbReference type="NCBI Taxonomy" id="205921"/>
    <lineage>
        <taxon>Bacteria</taxon>
        <taxon>Bacillati</taxon>
        <taxon>Bacillota</taxon>
        <taxon>Bacilli</taxon>
        <taxon>Lactobacillales</taxon>
        <taxon>Streptococcaceae</taxon>
        <taxon>Streptococcus</taxon>
    </lineage>
</organism>
<accession>Q3K3X8</accession>
<protein>
    <recommendedName>
        <fullName evidence="1">Holliday junction branch migration complex subunit RuvB</fullName>
        <ecNumber evidence="1">3.6.4.-</ecNumber>
    </recommendedName>
</protein>
<comment type="function">
    <text evidence="1">The RuvA-RuvB-RuvC complex processes Holliday junction (HJ) DNA during genetic recombination and DNA repair, while the RuvA-RuvB complex plays an important role in the rescue of blocked DNA replication forks via replication fork reversal (RFR). RuvA specifically binds to HJ cruciform DNA, conferring on it an open structure. The RuvB hexamer acts as an ATP-dependent pump, pulling dsDNA into and through the RuvAB complex. RuvB forms 2 homohexamers on either side of HJ DNA bound by 1 or 2 RuvA tetramers; 4 subunits per hexamer contact DNA at a time. Coordinated motions by a converter formed by DNA-disengaged RuvB subunits stimulates ATP hydrolysis and nucleotide exchange. Immobilization of the converter enables RuvB to convert the ATP-contained energy into a lever motion, pulling 2 nucleotides of DNA out of the RuvA tetramer per ATP hydrolyzed, thus driving DNA branch migration. The RuvB motors rotate together with the DNA substrate, which together with the progressing nucleotide cycle form the mechanistic basis for DNA recombination by continuous HJ branch migration. Branch migration allows RuvC to scan DNA until it finds its consensus sequence, where it cleaves and resolves cruciform DNA.</text>
</comment>
<comment type="catalytic activity">
    <reaction evidence="1">
        <text>ATP + H2O = ADP + phosphate + H(+)</text>
        <dbReference type="Rhea" id="RHEA:13065"/>
        <dbReference type="ChEBI" id="CHEBI:15377"/>
        <dbReference type="ChEBI" id="CHEBI:15378"/>
        <dbReference type="ChEBI" id="CHEBI:30616"/>
        <dbReference type="ChEBI" id="CHEBI:43474"/>
        <dbReference type="ChEBI" id="CHEBI:456216"/>
    </reaction>
</comment>
<comment type="subunit">
    <text evidence="1">Homohexamer. Forms an RuvA(8)-RuvB(12)-Holliday junction (HJ) complex. HJ DNA is sandwiched between 2 RuvA tetramers; dsDNA enters through RuvA and exits via RuvB. An RuvB hexamer assembles on each DNA strand where it exits the tetramer. Each RuvB hexamer is contacted by two RuvA subunits (via domain III) on 2 adjacent RuvB subunits; this complex drives branch migration. In the full resolvosome a probable DNA-RuvA(4)-RuvB(12)-RuvC(2) complex forms which resolves the HJ.</text>
</comment>
<comment type="subcellular location">
    <subcellularLocation>
        <location evidence="1">Cytoplasm</location>
    </subcellularLocation>
</comment>
<comment type="domain">
    <text evidence="1">Has 3 domains, the large (RuvB-L) and small ATPase (RuvB-S) domains and the C-terminal head (RuvB-H) domain. The head domain binds DNA, while the ATPase domains jointly bind ATP, ADP or are empty depending on the state of the subunit in the translocation cycle. During a single DNA translocation step the structure of each domain remains the same, but their relative positions change.</text>
</comment>
<comment type="similarity">
    <text evidence="1">Belongs to the RuvB family.</text>
</comment>
<dbReference type="EC" id="3.6.4.-" evidence="1"/>
<dbReference type="EMBL" id="CP000114">
    <property type="protein sequence ID" value="ABA44987.1"/>
    <property type="molecule type" value="Genomic_DNA"/>
</dbReference>
<dbReference type="RefSeq" id="WP_000196633.1">
    <property type="nucleotide sequence ID" value="NC_007432.1"/>
</dbReference>
<dbReference type="SMR" id="Q3K3X8"/>
<dbReference type="KEGG" id="sak:SAK_0082"/>
<dbReference type="HOGENOM" id="CLU_055599_1_0_9"/>
<dbReference type="GO" id="GO:0005737">
    <property type="term" value="C:cytoplasm"/>
    <property type="evidence" value="ECO:0007669"/>
    <property type="project" value="UniProtKB-SubCell"/>
</dbReference>
<dbReference type="GO" id="GO:0048476">
    <property type="term" value="C:Holliday junction resolvase complex"/>
    <property type="evidence" value="ECO:0007669"/>
    <property type="project" value="UniProtKB-UniRule"/>
</dbReference>
<dbReference type="GO" id="GO:0005524">
    <property type="term" value="F:ATP binding"/>
    <property type="evidence" value="ECO:0007669"/>
    <property type="project" value="UniProtKB-UniRule"/>
</dbReference>
<dbReference type="GO" id="GO:0016887">
    <property type="term" value="F:ATP hydrolysis activity"/>
    <property type="evidence" value="ECO:0007669"/>
    <property type="project" value="InterPro"/>
</dbReference>
<dbReference type="GO" id="GO:0000400">
    <property type="term" value="F:four-way junction DNA binding"/>
    <property type="evidence" value="ECO:0007669"/>
    <property type="project" value="UniProtKB-UniRule"/>
</dbReference>
<dbReference type="GO" id="GO:0009378">
    <property type="term" value="F:four-way junction helicase activity"/>
    <property type="evidence" value="ECO:0007669"/>
    <property type="project" value="InterPro"/>
</dbReference>
<dbReference type="GO" id="GO:0006310">
    <property type="term" value="P:DNA recombination"/>
    <property type="evidence" value="ECO:0007669"/>
    <property type="project" value="UniProtKB-UniRule"/>
</dbReference>
<dbReference type="GO" id="GO:0006281">
    <property type="term" value="P:DNA repair"/>
    <property type="evidence" value="ECO:0007669"/>
    <property type="project" value="UniProtKB-UniRule"/>
</dbReference>
<dbReference type="CDD" id="cd00009">
    <property type="entry name" value="AAA"/>
    <property type="match status" value="1"/>
</dbReference>
<dbReference type="Gene3D" id="1.10.8.60">
    <property type="match status" value="1"/>
</dbReference>
<dbReference type="Gene3D" id="3.40.50.300">
    <property type="entry name" value="P-loop containing nucleotide triphosphate hydrolases"/>
    <property type="match status" value="1"/>
</dbReference>
<dbReference type="Gene3D" id="1.10.10.10">
    <property type="entry name" value="Winged helix-like DNA-binding domain superfamily/Winged helix DNA-binding domain"/>
    <property type="match status" value="1"/>
</dbReference>
<dbReference type="HAMAP" id="MF_00016">
    <property type="entry name" value="DNA_HJ_migration_RuvB"/>
    <property type="match status" value="1"/>
</dbReference>
<dbReference type="InterPro" id="IPR003593">
    <property type="entry name" value="AAA+_ATPase"/>
</dbReference>
<dbReference type="InterPro" id="IPR041445">
    <property type="entry name" value="AAA_lid_4"/>
</dbReference>
<dbReference type="InterPro" id="IPR004605">
    <property type="entry name" value="DNA_helicase_Holl-junc_RuvB"/>
</dbReference>
<dbReference type="InterPro" id="IPR027417">
    <property type="entry name" value="P-loop_NTPase"/>
</dbReference>
<dbReference type="InterPro" id="IPR008824">
    <property type="entry name" value="RuvB-like_N"/>
</dbReference>
<dbReference type="InterPro" id="IPR008823">
    <property type="entry name" value="RuvB_C"/>
</dbReference>
<dbReference type="InterPro" id="IPR036388">
    <property type="entry name" value="WH-like_DNA-bd_sf"/>
</dbReference>
<dbReference type="InterPro" id="IPR036390">
    <property type="entry name" value="WH_DNA-bd_sf"/>
</dbReference>
<dbReference type="NCBIfam" id="NF000868">
    <property type="entry name" value="PRK00080.1"/>
    <property type="match status" value="1"/>
</dbReference>
<dbReference type="NCBIfam" id="TIGR00635">
    <property type="entry name" value="ruvB"/>
    <property type="match status" value="1"/>
</dbReference>
<dbReference type="PANTHER" id="PTHR42848">
    <property type="match status" value="1"/>
</dbReference>
<dbReference type="PANTHER" id="PTHR42848:SF1">
    <property type="entry name" value="HOLLIDAY JUNCTION BRANCH MIGRATION COMPLEX SUBUNIT RUVB"/>
    <property type="match status" value="1"/>
</dbReference>
<dbReference type="Pfam" id="PF17864">
    <property type="entry name" value="AAA_lid_4"/>
    <property type="match status" value="1"/>
</dbReference>
<dbReference type="Pfam" id="PF05491">
    <property type="entry name" value="RuvB_C"/>
    <property type="match status" value="1"/>
</dbReference>
<dbReference type="Pfam" id="PF05496">
    <property type="entry name" value="RuvB_N"/>
    <property type="match status" value="1"/>
</dbReference>
<dbReference type="SMART" id="SM00382">
    <property type="entry name" value="AAA"/>
    <property type="match status" value="1"/>
</dbReference>
<dbReference type="SUPFAM" id="SSF52540">
    <property type="entry name" value="P-loop containing nucleoside triphosphate hydrolases"/>
    <property type="match status" value="1"/>
</dbReference>
<dbReference type="SUPFAM" id="SSF46785">
    <property type="entry name" value="Winged helix' DNA-binding domain"/>
    <property type="match status" value="1"/>
</dbReference>
<evidence type="ECO:0000255" key="1">
    <source>
        <dbReference type="HAMAP-Rule" id="MF_00016"/>
    </source>
</evidence>
<feature type="chain" id="PRO_0000235412" description="Holliday junction branch migration complex subunit RuvB">
    <location>
        <begin position="1"/>
        <end position="332"/>
    </location>
</feature>
<feature type="region of interest" description="Large ATPase domain (RuvB-L)" evidence="1">
    <location>
        <begin position="1"/>
        <end position="181"/>
    </location>
</feature>
<feature type="region of interest" description="Small ATPAse domain (RuvB-S)" evidence="1">
    <location>
        <begin position="182"/>
        <end position="252"/>
    </location>
</feature>
<feature type="region of interest" description="Head domain (RuvB-H)" evidence="1">
    <location>
        <begin position="255"/>
        <end position="332"/>
    </location>
</feature>
<feature type="binding site" evidence="1">
    <location>
        <position position="20"/>
    </location>
    <ligand>
        <name>ATP</name>
        <dbReference type="ChEBI" id="CHEBI:30616"/>
    </ligand>
</feature>
<feature type="binding site" evidence="1">
    <location>
        <position position="21"/>
    </location>
    <ligand>
        <name>ATP</name>
        <dbReference type="ChEBI" id="CHEBI:30616"/>
    </ligand>
</feature>
<feature type="binding site" evidence="1">
    <location>
        <position position="62"/>
    </location>
    <ligand>
        <name>ATP</name>
        <dbReference type="ChEBI" id="CHEBI:30616"/>
    </ligand>
</feature>
<feature type="binding site" evidence="1">
    <location>
        <position position="65"/>
    </location>
    <ligand>
        <name>ATP</name>
        <dbReference type="ChEBI" id="CHEBI:30616"/>
    </ligand>
</feature>
<feature type="binding site" evidence="1">
    <location>
        <position position="66"/>
    </location>
    <ligand>
        <name>ATP</name>
        <dbReference type="ChEBI" id="CHEBI:30616"/>
    </ligand>
</feature>
<feature type="binding site" evidence="1">
    <location>
        <position position="66"/>
    </location>
    <ligand>
        <name>Mg(2+)</name>
        <dbReference type="ChEBI" id="CHEBI:18420"/>
    </ligand>
</feature>
<feature type="binding site" evidence="1">
    <location>
        <position position="67"/>
    </location>
    <ligand>
        <name>ATP</name>
        <dbReference type="ChEBI" id="CHEBI:30616"/>
    </ligand>
</feature>
<feature type="binding site" evidence="1">
    <location>
        <begin position="128"/>
        <end position="130"/>
    </location>
    <ligand>
        <name>ATP</name>
        <dbReference type="ChEBI" id="CHEBI:30616"/>
    </ligand>
</feature>
<feature type="binding site" evidence="1">
    <location>
        <position position="171"/>
    </location>
    <ligand>
        <name>ATP</name>
        <dbReference type="ChEBI" id="CHEBI:30616"/>
    </ligand>
</feature>
<feature type="binding site" evidence="1">
    <location>
        <position position="181"/>
    </location>
    <ligand>
        <name>ATP</name>
        <dbReference type="ChEBI" id="CHEBI:30616"/>
    </ligand>
</feature>
<feature type="binding site" evidence="1">
    <location>
        <position position="218"/>
    </location>
    <ligand>
        <name>ATP</name>
        <dbReference type="ChEBI" id="CHEBI:30616"/>
    </ligand>
</feature>
<feature type="binding site" evidence="1">
    <location>
        <position position="291"/>
    </location>
    <ligand>
        <name>DNA</name>
        <dbReference type="ChEBI" id="CHEBI:16991"/>
    </ligand>
</feature>
<feature type="binding site" evidence="1">
    <location>
        <position position="310"/>
    </location>
    <ligand>
        <name>DNA</name>
        <dbReference type="ChEBI" id="CHEBI:16991"/>
    </ligand>
</feature>
<feature type="binding site" evidence="1">
    <location>
        <position position="312"/>
    </location>
    <ligand>
        <name>DNA</name>
        <dbReference type="ChEBI" id="CHEBI:16991"/>
    </ligand>
</feature>
<feature type="binding site" evidence="1">
    <location>
        <position position="315"/>
    </location>
    <ligand>
        <name>DNA</name>
        <dbReference type="ChEBI" id="CHEBI:16991"/>
    </ligand>
</feature>
<proteinExistence type="inferred from homology"/>
<gene>
    <name evidence="1" type="primary">ruvB</name>
    <name type="ordered locus">SAK_0082</name>
</gene>
<keyword id="KW-0067">ATP-binding</keyword>
<keyword id="KW-0963">Cytoplasm</keyword>
<keyword id="KW-0227">DNA damage</keyword>
<keyword id="KW-0233">DNA recombination</keyword>
<keyword id="KW-0234">DNA repair</keyword>
<keyword id="KW-0238">DNA-binding</keyword>
<keyword id="KW-0378">Hydrolase</keyword>
<keyword id="KW-0547">Nucleotide-binding</keyword>
<name>RUVB_STRA1</name>
<reference key="1">
    <citation type="journal article" date="2005" name="Proc. Natl. Acad. Sci. U.S.A.">
        <title>Genome analysis of multiple pathogenic isolates of Streptococcus agalactiae: implications for the microbial 'pan-genome'.</title>
        <authorList>
            <person name="Tettelin H."/>
            <person name="Masignani V."/>
            <person name="Cieslewicz M.J."/>
            <person name="Donati C."/>
            <person name="Medini D."/>
            <person name="Ward N.L."/>
            <person name="Angiuoli S.V."/>
            <person name="Crabtree J."/>
            <person name="Jones A.L."/>
            <person name="Durkin A.S."/>
            <person name="DeBoy R.T."/>
            <person name="Davidsen T.M."/>
            <person name="Mora M."/>
            <person name="Scarselli M."/>
            <person name="Margarit y Ros I."/>
            <person name="Peterson J.D."/>
            <person name="Hauser C.R."/>
            <person name="Sundaram J.P."/>
            <person name="Nelson W.C."/>
            <person name="Madupu R."/>
            <person name="Brinkac L.M."/>
            <person name="Dodson R.J."/>
            <person name="Rosovitz M.J."/>
            <person name="Sullivan S.A."/>
            <person name="Daugherty S.C."/>
            <person name="Haft D.H."/>
            <person name="Selengut J."/>
            <person name="Gwinn M.L."/>
            <person name="Zhou L."/>
            <person name="Zafar N."/>
            <person name="Khouri H."/>
            <person name="Radune D."/>
            <person name="Dimitrov G."/>
            <person name="Watkins K."/>
            <person name="O'Connor K.J."/>
            <person name="Smith S."/>
            <person name="Utterback T.R."/>
            <person name="White O."/>
            <person name="Rubens C.E."/>
            <person name="Grandi G."/>
            <person name="Madoff L.C."/>
            <person name="Kasper D.L."/>
            <person name="Telford J.L."/>
            <person name="Wessels M.R."/>
            <person name="Rappuoli R."/>
            <person name="Fraser C.M."/>
        </authorList>
    </citation>
    <scope>NUCLEOTIDE SEQUENCE [LARGE SCALE GENOMIC DNA]</scope>
    <source>
        <strain>ATCC 27591 / A909 / CDC SS700</strain>
    </source>
</reference>